<reference key="1">
    <citation type="journal article" date="1996" name="EMBO J.">
        <title>Complete nucleotide sequence of Saccharomyces cerevisiae chromosome X.</title>
        <authorList>
            <person name="Galibert F."/>
            <person name="Alexandraki D."/>
            <person name="Baur A."/>
            <person name="Boles E."/>
            <person name="Chalwatzis N."/>
            <person name="Chuat J.-C."/>
            <person name="Coster F."/>
            <person name="Cziepluch C."/>
            <person name="de Haan M."/>
            <person name="Domdey H."/>
            <person name="Durand P."/>
            <person name="Entian K.-D."/>
            <person name="Gatius M."/>
            <person name="Goffeau A."/>
            <person name="Grivell L.A."/>
            <person name="Hennemann A."/>
            <person name="Herbert C.J."/>
            <person name="Heumann K."/>
            <person name="Hilger F."/>
            <person name="Hollenberg C.P."/>
            <person name="Huang M.-E."/>
            <person name="Jacq C."/>
            <person name="Jauniaux J.-C."/>
            <person name="Katsoulou C."/>
            <person name="Kirchrath L."/>
            <person name="Kleine K."/>
            <person name="Kordes E."/>
            <person name="Koetter P."/>
            <person name="Liebl S."/>
            <person name="Louis E.J."/>
            <person name="Manus V."/>
            <person name="Mewes H.-W."/>
            <person name="Miosga T."/>
            <person name="Obermaier B."/>
            <person name="Perea J."/>
            <person name="Pohl T.M."/>
            <person name="Portetelle D."/>
            <person name="Pujol A."/>
            <person name="Purnelle B."/>
            <person name="Ramezani Rad M."/>
            <person name="Rasmussen S.W."/>
            <person name="Rose M."/>
            <person name="Rossau R."/>
            <person name="Schaaff-Gerstenschlaeger I."/>
            <person name="Smits P.H.M."/>
            <person name="Scarcez T."/>
            <person name="Soriano N."/>
            <person name="To Van D."/>
            <person name="Tzermia M."/>
            <person name="Van Broekhoven A."/>
            <person name="Vandenbol M."/>
            <person name="Wedler H."/>
            <person name="von Wettstein D."/>
            <person name="Wambutt R."/>
            <person name="Zagulski M."/>
            <person name="Zollner A."/>
            <person name="Karpfinger-Hartl L."/>
        </authorList>
    </citation>
    <scope>NUCLEOTIDE SEQUENCE [LARGE SCALE GENOMIC DNA]</scope>
    <source>
        <strain>ATCC 204508 / S288c</strain>
    </source>
</reference>
<reference key="2">
    <citation type="journal article" date="2014" name="G3 (Bethesda)">
        <title>The reference genome sequence of Saccharomyces cerevisiae: Then and now.</title>
        <authorList>
            <person name="Engel S.R."/>
            <person name="Dietrich F.S."/>
            <person name="Fisk D.G."/>
            <person name="Binkley G."/>
            <person name="Balakrishnan R."/>
            <person name="Costanzo M.C."/>
            <person name="Dwight S.S."/>
            <person name="Hitz B.C."/>
            <person name="Karra K."/>
            <person name="Nash R.S."/>
            <person name="Weng S."/>
            <person name="Wong E.D."/>
            <person name="Lloyd P."/>
            <person name="Skrzypek M.S."/>
            <person name="Miyasato S.R."/>
            <person name="Simison M."/>
            <person name="Cherry J.M."/>
        </authorList>
    </citation>
    <scope>GENOME REANNOTATION</scope>
    <source>
        <strain>ATCC 204508 / S288c</strain>
    </source>
</reference>
<keyword id="KW-0472">Membrane</keyword>
<keyword id="KW-0812">Transmembrane</keyword>
<keyword id="KW-1133">Transmembrane helix</keyword>
<sequence length="105" mass="12477">MTGYRVIHLTGIYYTFYRRKSFFFFFLEYLHNSLRVLSWKGIITKIAASPFVIVLYFNTAFFNPFKTLYENEKKKAKKNLKLTRENASLSIRKMHQYSAIIPSGT</sequence>
<comment type="subcellular location">
    <subcellularLocation>
        <location evidence="2">Membrane</location>
        <topology evidence="2">Single-pass membrane protein</topology>
    </subcellularLocation>
</comment>
<comment type="miscellaneous">
    <text evidence="2">Partially overlaps YJL181W.</text>
</comment>
<comment type="caution">
    <text evidence="3">Product of a dubious gene prediction unlikely to encode a functional protein. Because of that it is not part of the S.cerevisiae S288c complete/reference proteome set.</text>
</comment>
<accession>P46986</accession>
<dbReference type="EMBL" id="Z49457">
    <property type="protein sequence ID" value="CAA89476.1"/>
    <property type="molecule type" value="Genomic_DNA"/>
</dbReference>
<dbReference type="PIR" id="S56965">
    <property type="entry name" value="S56965"/>
</dbReference>
<dbReference type="DIP" id="DIP-5472N"/>
<dbReference type="IntAct" id="P46986">
    <property type="interactions" value="2"/>
</dbReference>
<dbReference type="PaxDb" id="4932-YJL182C"/>
<dbReference type="EnsemblFungi" id="YJL182C_mRNA">
    <property type="protein sequence ID" value="YJL182C"/>
    <property type="gene ID" value="YJL182C"/>
</dbReference>
<dbReference type="AGR" id="SGD:S000003718"/>
<dbReference type="SGD" id="S000003718">
    <property type="gene designation" value="YJL182C"/>
</dbReference>
<dbReference type="HOGENOM" id="CLU_2238728_0_0_1"/>
<dbReference type="GO" id="GO:0016020">
    <property type="term" value="C:membrane"/>
    <property type="evidence" value="ECO:0007669"/>
    <property type="project" value="UniProtKB-SubCell"/>
</dbReference>
<feature type="chain" id="PRO_0000203022" description="Putative uncharacterized protein YJL182C">
    <location>
        <begin position="1"/>
        <end position="105"/>
    </location>
</feature>
<feature type="transmembrane region" description="Helical" evidence="1">
    <location>
        <begin position="41"/>
        <end position="62"/>
    </location>
</feature>
<proteinExistence type="uncertain"/>
<protein>
    <recommendedName>
        <fullName>Putative uncharacterized protein YJL182C</fullName>
    </recommendedName>
</protein>
<name>YJS2_YEAST</name>
<evidence type="ECO:0000255" key="1"/>
<evidence type="ECO:0000305" key="2"/>
<evidence type="ECO:0000305" key="3">
    <source>
    </source>
</evidence>
<organism>
    <name type="scientific">Saccharomyces cerevisiae (strain ATCC 204508 / S288c)</name>
    <name type="common">Baker's yeast</name>
    <dbReference type="NCBI Taxonomy" id="559292"/>
    <lineage>
        <taxon>Eukaryota</taxon>
        <taxon>Fungi</taxon>
        <taxon>Dikarya</taxon>
        <taxon>Ascomycota</taxon>
        <taxon>Saccharomycotina</taxon>
        <taxon>Saccharomycetes</taxon>
        <taxon>Saccharomycetales</taxon>
        <taxon>Saccharomycetaceae</taxon>
        <taxon>Saccharomyces</taxon>
    </lineage>
</organism>
<gene>
    <name type="ordered locus">YJL182C</name>
    <name type="ORF">J0430</name>
</gene>